<sequence>MPRRKQQAPKRAAGYAQEEVLKEEEEIKEEEEEEEDSGSVAQHQSSNDTGTDEELETGPEQKGYFSCQNSPGSHLSNQDAENESLLSDASDQVSDVKSVCGRDVSDKKANTHPKLPSEPHNCMDKMTAVYANILSDSYWSGLGLGFKLSNSERRNCDTRNSSGKNDFDWHQDALSKSLQQNLPSRSVSKPSLFSSVQLYRQSSKLCGSVFTGASRFRCRQCSAAYDTLVELTVHMNETGHYQDDNRKKDKLRPTSYSKPRKRAFQDMDKEDAQKVLKCMFCGDSFDSLQDLSVHMIKTKHYQKVPLKEPVPTISSKMVTPAKKRVFDVNRPCSPDSTTGSLADSFSSQKSANLQLPSNSRYGYQNGASYTWQFEACKSQILKCMECGSSHDTLQQLTTHMMVTGHFLKVTSSASKKGKQLVLDPLAVEKMQSLSETPNSESLAPKPSSNSPSECTASTTELKKESKKEKGEGIEDEQGVKSEDYEDSLQKPLDPTIKYQYLREEDLEDGSKGGGDILKSLENTVTTAINKAQNGAPSWSAYPSIHAAYQLSEGTKPPMAMGSQILQIRPNLANKLRPIAPKWKGMPLGPVPTSLALYTQVKKETEDKDEVVKQCGKESPHEEATSFSQPEGESFSKIEPPSESRKAEPCPLKEEEKPQKEKPEPLEPVSSLTNGCAPANHTPALPSINPLSALQSVLNNHLGKATEPLRSPSCSSPNSSTSPVFHKSSLHVVDKPVISPTSTRPAASVARHYLFENTDQPIDLTKSKSKRAESSQAQSCTSPPQKHALCDIADMVKVLPKATTPKPAASSRVPPMKLEIDVRRFEDVSSEVSTLHKRKGRQSNWNPQHLLILQAQFASSLFQTSEGKYLLSDLGPQERMQISKFTGLSMTTISHWLANVKYQLRKTGGTKFLKNMDKGHPIFYCSDCASQFRTPSTYISHLESHLGFQMKDMTRMAADQQSKVEQEISRVSSAQRSPETIAGEEDTDSKFKCKLCRRTFVSKHAVKLHLSKTHSKSPEHHSQFVADVDEE</sequence>
<gene>
    <name type="primary">Tshz2</name>
    <name type="synonym">Kiaa4248</name>
    <name type="synonym">Sdccag33l</name>
    <name type="synonym">Tsh2</name>
    <name type="synonym">Zfp218</name>
    <name type="synonym">Znf218</name>
</gene>
<comment type="function">
    <text evidence="8">Probable transcriptional regulator involved in developmental processes. May act as a transcriptional repressor (Potential).</text>
</comment>
<comment type="subunit">
    <text evidence="6">Interacts (via homeobox domain) with APBB1 (via PID domain 1).</text>
</comment>
<comment type="subcellular location">
    <subcellularLocation>
        <location evidence="8">Nucleus</location>
    </subcellularLocation>
</comment>
<comment type="developmental stage">
    <text evidence="7">Expressed in mesenchymal cells in proximal ureters at 14 dpc, preceding the smooth muscle precursor cells differentiation and the expression of contractile proteins from 15 dpc.</text>
</comment>
<comment type="PTM">
    <text evidence="1">Sumoylated.</text>
</comment>
<comment type="similarity">
    <text evidence="8">Belongs to the teashirt C2H2-type zinc-finger protein family.</text>
</comment>
<comment type="sequence caution" evidence="8">
    <conflict type="erroneous initiation">
        <sequence resource="EMBL-CDS" id="AAF64095"/>
    </conflict>
    <text>Extended N-terminus.</text>
</comment>
<comment type="sequence caution" evidence="8">
    <conflict type="erroneous initiation">
        <sequence resource="EMBL-CDS" id="BAD90333"/>
    </conflict>
    <text>Extended N-terminus.</text>
</comment>
<protein>
    <recommendedName>
        <fullName>Teashirt homolog 2</fullName>
    </recommendedName>
    <alternativeName>
        <fullName>SDCCAG33-like protein</fullName>
    </alternativeName>
    <alternativeName>
        <fullName>Zinc finger protein 218</fullName>
    </alternativeName>
</protein>
<name>TSH2_MOUSE</name>
<organism>
    <name type="scientific">Mus musculus</name>
    <name type="common">Mouse</name>
    <dbReference type="NCBI Taxonomy" id="10090"/>
    <lineage>
        <taxon>Eukaryota</taxon>
        <taxon>Metazoa</taxon>
        <taxon>Chordata</taxon>
        <taxon>Craniata</taxon>
        <taxon>Vertebrata</taxon>
        <taxon>Euteleostomi</taxon>
        <taxon>Mammalia</taxon>
        <taxon>Eutheria</taxon>
        <taxon>Euarchontoglires</taxon>
        <taxon>Glires</taxon>
        <taxon>Rodentia</taxon>
        <taxon>Myomorpha</taxon>
        <taxon>Muroidea</taxon>
        <taxon>Muridae</taxon>
        <taxon>Murinae</taxon>
        <taxon>Mus</taxon>
        <taxon>Mus</taxon>
    </lineage>
</organism>
<proteinExistence type="evidence at protein level"/>
<evidence type="ECO:0000250" key="1"/>
<evidence type="ECO:0000250" key="2">
    <source>
        <dbReference type="UniProtKB" id="Q9NRE2"/>
    </source>
</evidence>
<evidence type="ECO:0000255" key="3"/>
<evidence type="ECO:0000255" key="4">
    <source>
        <dbReference type="PROSITE-ProRule" id="PRU00042"/>
    </source>
</evidence>
<evidence type="ECO:0000256" key="5">
    <source>
        <dbReference type="SAM" id="MobiDB-lite"/>
    </source>
</evidence>
<evidence type="ECO:0000269" key="6">
    <source>
    </source>
</evidence>
<evidence type="ECO:0000269" key="7">
    <source>
    </source>
</evidence>
<evidence type="ECO:0000305" key="8"/>
<evidence type="ECO:0007744" key="9">
    <source>
    </source>
</evidence>
<reference key="1">
    <citation type="journal article" date="2004" name="Genome Res.">
        <title>The status, quality, and expansion of the NIH full-length cDNA project: the Mammalian Gene Collection (MGC).</title>
        <authorList>
            <consortium name="The MGC Project Team"/>
        </authorList>
    </citation>
    <scope>NUCLEOTIDE SEQUENCE [LARGE SCALE MRNA]</scope>
    <source>
        <strain>C57BL/6J</strain>
        <tissue>Brain</tissue>
    </source>
</reference>
<reference key="2">
    <citation type="submission" date="2005-02" db="EMBL/GenBank/DDBJ databases">
        <title>Prediction of the coding sequences of mouse homologues of KIAA gene. The complete nucleotide sequences of mouse KIAA-homologous cDNAs identified by screening of terminal sequences of cDNA clones randomly sampled from size-fractionated libraries.</title>
        <authorList>
            <person name="Okazaki N."/>
            <person name="Kikuno R.F."/>
            <person name="Ohara R."/>
            <person name="Inamoto S."/>
            <person name="Nagase T."/>
            <person name="Ohara O."/>
            <person name="Koga H."/>
        </authorList>
    </citation>
    <scope>NUCLEOTIDE SEQUENCE [LARGE SCALE MRNA]</scope>
    <source>
        <tissue>Fetal brain</tissue>
    </source>
</reference>
<reference key="3">
    <citation type="journal article" date="2000" name="Mech. Dev.">
        <title>Vertebrate orthologues of the Drosophila region-specific patterning gene teashirt.</title>
        <authorList>
            <person name="Caubit X."/>
            <person name="Core N."/>
            <person name="Boned A."/>
            <person name="Kerridge S."/>
            <person name="Djabali M."/>
            <person name="Fasano L."/>
        </authorList>
    </citation>
    <scope>NUCLEOTIDE SEQUENCE [GENOMIC DNA] OF 13-1030</scope>
    <scope>FUNCTION</scope>
</reference>
<reference key="4">
    <citation type="journal article" date="2004" name="Development">
        <title>Three putative murine Teashirt orthologues specify trunk structures in Drosophila in the same way as the Drosophila teashirt gene.</title>
        <authorList>
            <person name="Manfroid I."/>
            <person name="Caubit X."/>
            <person name="Kerridge S."/>
            <person name="Fasano L."/>
        </authorList>
    </citation>
    <scope>POSSIBLE FUNCTION</scope>
</reference>
<reference key="5">
    <citation type="journal article" date="2009" name="PLoS ONE">
        <title>FE65 binds Teashirt, inhibiting expression of the primate-specific caspase-4.</title>
        <authorList>
            <person name="Kajiwara Y."/>
            <person name="Akram A."/>
            <person name="Katsel P."/>
            <person name="Haroutunian V."/>
            <person name="Schmeidler J."/>
            <person name="Beecham G."/>
            <person name="Haines J.L."/>
            <person name="Pericak-Vance M.A."/>
            <person name="Buxbaum J.D."/>
        </authorList>
    </citation>
    <scope>INTERACTION WITH APBB1</scope>
</reference>
<reference key="6">
    <citation type="journal article" date="2010" name="Cell">
        <title>A tissue-specific atlas of mouse protein phosphorylation and expression.</title>
        <authorList>
            <person name="Huttlin E.L."/>
            <person name="Jedrychowski M.P."/>
            <person name="Elias J.E."/>
            <person name="Goswami T."/>
            <person name="Rad R."/>
            <person name="Beausoleil S.A."/>
            <person name="Villen J."/>
            <person name="Haas W."/>
            <person name="Sowa M.E."/>
            <person name="Gygi S.P."/>
        </authorList>
    </citation>
    <scope>PHOSPHORYLATION [LARGE SCALE ANALYSIS] AT SER-976</scope>
    <scope>IDENTIFICATION BY MASS SPECTROMETRY [LARGE SCALE ANALYSIS]</scope>
    <source>
        <tissue>Kidney</tissue>
        <tissue>Spleen</tissue>
    </source>
</reference>
<reference key="7">
    <citation type="journal article" date="2010" name="Nephrol. Dial. Transplant.">
        <title>Analysis of TSHZ2 and TSHZ3 genes in congenital pelvi-ureteric junction obstruction.</title>
        <authorList>
            <person name="Jenkins D."/>
            <person name="Caubit X."/>
            <person name="Dimovski A."/>
            <person name="Matevska N."/>
            <person name="Lye C.M."/>
            <person name="Cabuk F."/>
            <person name="Gucev Z."/>
            <person name="Tasic V."/>
            <person name="Fasano L."/>
            <person name="Woolf A.S."/>
        </authorList>
    </citation>
    <scope>DEVELOPMENTAL STAGE</scope>
</reference>
<feature type="chain" id="PRO_0000047065" description="Teashirt homolog 2">
    <location>
        <begin position="1"/>
        <end position="1030"/>
    </location>
</feature>
<feature type="zinc finger region" description="C2H2-type 1" evidence="4">
    <location>
        <begin position="216"/>
        <end position="240"/>
    </location>
</feature>
<feature type="zinc finger region" description="C2H2-type 2" evidence="4">
    <location>
        <begin position="276"/>
        <end position="300"/>
    </location>
</feature>
<feature type="zinc finger region" description="C2H2-type 3; atypical" evidence="4">
    <location>
        <begin position="381"/>
        <end position="405"/>
    </location>
</feature>
<feature type="DNA-binding region" description="Homeobox">
    <location>
        <begin position="837"/>
        <end position="907"/>
    </location>
</feature>
<feature type="zinc finger region" description="C2H2-type 4" evidence="4">
    <location>
        <begin position="922"/>
        <end position="944"/>
    </location>
</feature>
<feature type="zinc finger region" description="C2H2-type 5" evidence="4">
    <location>
        <begin position="990"/>
        <end position="1013"/>
    </location>
</feature>
<feature type="region of interest" description="Disordered" evidence="5">
    <location>
        <begin position="1"/>
        <end position="120"/>
    </location>
</feature>
<feature type="region of interest" description="Disordered" evidence="5">
    <location>
        <begin position="240"/>
        <end position="266"/>
    </location>
</feature>
<feature type="region of interest" description="Disordered" evidence="5">
    <location>
        <begin position="328"/>
        <end position="348"/>
    </location>
</feature>
<feature type="region of interest" description="Disordered" evidence="5">
    <location>
        <begin position="432"/>
        <end position="488"/>
    </location>
</feature>
<feature type="region of interest" description="Disordered" evidence="5">
    <location>
        <begin position="608"/>
        <end position="687"/>
    </location>
</feature>
<feature type="region of interest" description="Disordered" evidence="5">
    <location>
        <begin position="703"/>
        <end position="726"/>
    </location>
</feature>
<feature type="region of interest" description="Disordered" evidence="5">
    <location>
        <begin position="759"/>
        <end position="784"/>
    </location>
</feature>
<feature type="region of interest" description="Disordered" evidence="5">
    <location>
        <begin position="965"/>
        <end position="987"/>
    </location>
</feature>
<feature type="region of interest" description="Disordered" evidence="5">
    <location>
        <begin position="1009"/>
        <end position="1030"/>
    </location>
</feature>
<feature type="coiled-coil region" evidence="3">
    <location>
        <begin position="11"/>
        <end position="42"/>
    </location>
</feature>
<feature type="compositionally biased region" description="Acidic residues" evidence="5">
    <location>
        <begin position="21"/>
        <end position="37"/>
    </location>
</feature>
<feature type="compositionally biased region" description="Polar residues" evidence="5">
    <location>
        <begin position="39"/>
        <end position="49"/>
    </location>
</feature>
<feature type="compositionally biased region" description="Polar residues" evidence="5">
    <location>
        <begin position="66"/>
        <end position="95"/>
    </location>
</feature>
<feature type="compositionally biased region" description="Basic and acidic residues" evidence="5">
    <location>
        <begin position="103"/>
        <end position="120"/>
    </location>
</feature>
<feature type="compositionally biased region" description="Polar residues" evidence="5">
    <location>
        <begin position="334"/>
        <end position="348"/>
    </location>
</feature>
<feature type="compositionally biased region" description="Polar residues" evidence="5">
    <location>
        <begin position="432"/>
        <end position="459"/>
    </location>
</feature>
<feature type="compositionally biased region" description="Basic and acidic residues" evidence="5">
    <location>
        <begin position="460"/>
        <end position="482"/>
    </location>
</feature>
<feature type="compositionally biased region" description="Basic and acidic residues" evidence="5">
    <location>
        <begin position="608"/>
        <end position="623"/>
    </location>
</feature>
<feature type="compositionally biased region" description="Basic and acidic residues" evidence="5">
    <location>
        <begin position="633"/>
        <end position="664"/>
    </location>
</feature>
<feature type="compositionally biased region" description="Low complexity" evidence="5">
    <location>
        <begin position="710"/>
        <end position="722"/>
    </location>
</feature>
<feature type="compositionally biased region" description="Polar residues" evidence="5">
    <location>
        <begin position="773"/>
        <end position="783"/>
    </location>
</feature>
<feature type="compositionally biased region" description="Polar residues" evidence="5">
    <location>
        <begin position="968"/>
        <end position="977"/>
    </location>
</feature>
<feature type="modified residue" description="Phosphoserine" evidence="9">
    <location>
        <position position="976"/>
    </location>
</feature>
<feature type="cross-link" description="Glycyl lysine isopeptide (Lys-Gly) (interchain with G-Cter in SUMO2)" evidence="2">
    <location>
        <position position="189"/>
    </location>
</feature>
<feature type="cross-link" description="Glycyl lysine isopeptide (Lys-Gly) (interchain with G-Cter in SUMO2)" evidence="2">
    <location>
        <position position="307"/>
    </location>
</feature>
<feature type="cross-link" description="Glycyl lysine isopeptide (Lys-Gly) (interchain with G-Cter in SUMO2)" evidence="2">
    <location>
        <position position="316"/>
    </location>
</feature>
<feature type="cross-link" description="Glycyl lysine isopeptide (Lys-Gly) (interchain with G-Cter in SUMO2)" evidence="2">
    <location>
        <position position="418"/>
    </location>
</feature>
<feature type="cross-link" description="Glycyl lysine isopeptide (Lys-Gly) (interchain with G-Cter in SUMO2)" evidence="2">
    <location>
        <position position="462"/>
    </location>
</feature>
<feature type="cross-link" description="Glycyl lysine isopeptide (Lys-Gly) (interchain with G-Cter in SUMO2)" evidence="2">
    <location>
        <position position="480"/>
    </location>
</feature>
<feature type="cross-link" description="Glycyl lysine isopeptide (Lys-Gly) (interchain with G-Cter in SUMO2)" evidence="2">
    <location>
        <position position="497"/>
    </location>
</feature>
<feature type="cross-link" description="Glycyl lysine isopeptide (Lys-Gly) (interchain with G-Cter in SUMO2)" evidence="2">
    <location>
        <position position="601"/>
    </location>
</feature>
<feature type="cross-link" description="Glycyl lysine isopeptide (Lys-Gly) (interchain with G-Cter in SUMO2)" evidence="2">
    <location>
        <position position="652"/>
    </location>
</feature>
<feature type="cross-link" description="Glycyl lysine isopeptide (Lys-Gly) (interchain with G-Cter in SUMO2)" evidence="2">
    <location>
        <position position="796"/>
    </location>
</feature>
<feature type="cross-link" description="Glycyl lysine isopeptide (Lys-Gly) (interchain with G-Cter in SUMO2)" evidence="2">
    <location>
        <position position="816"/>
    </location>
</feature>
<feature type="cross-link" description="Glycyl lysine isopeptide (Lys-Gly) (interchain with G-Cter in SUMO2)" evidence="2">
    <location>
        <position position="962"/>
    </location>
</feature>
<feature type="sequence conflict" description="In Ref. 1; AAH79550." evidence="8" ref="1">
    <location>
        <begin position="159"/>
        <end position="227"/>
    </location>
</feature>
<feature type="sequence conflict" description="In Ref. 3; AAF64095." evidence="8" ref="3">
    <original>K</original>
    <variation>R</variation>
    <location>
        <position position="607"/>
    </location>
</feature>
<feature type="sequence conflict" description="In Ref. 3; AAF64095." evidence="8" ref="3">
    <original>T</original>
    <variation>A</variation>
    <location>
        <position position="1012"/>
    </location>
</feature>
<dbReference type="EMBL" id="BC079877">
    <property type="protein sequence ID" value="AAH79877.1"/>
    <property type="molecule type" value="mRNA"/>
</dbReference>
<dbReference type="EMBL" id="BC079550">
    <property type="protein sequence ID" value="AAH79550.1"/>
    <property type="molecule type" value="mRNA"/>
</dbReference>
<dbReference type="EMBL" id="AK220569">
    <property type="protein sequence ID" value="BAD90333.1"/>
    <property type="status" value="ALT_INIT"/>
    <property type="molecule type" value="mRNA"/>
</dbReference>
<dbReference type="EMBL" id="AF207880">
    <property type="protein sequence ID" value="AAF64095.1"/>
    <property type="status" value="ALT_INIT"/>
    <property type="molecule type" value="Genomic_DNA"/>
</dbReference>
<dbReference type="CCDS" id="CCDS50805.1"/>
<dbReference type="RefSeq" id="NP_001349951.1">
    <property type="nucleotide sequence ID" value="NM_001363022.2"/>
</dbReference>
<dbReference type="RefSeq" id="NP_001349952.1">
    <property type="nucleotide sequence ID" value="NM_001363023.2"/>
</dbReference>
<dbReference type="RefSeq" id="NP_536703.2">
    <property type="nucleotide sequence ID" value="NM_080455.4"/>
</dbReference>
<dbReference type="RefSeq" id="XP_011237817.1">
    <property type="nucleotide sequence ID" value="XM_011239515.2"/>
</dbReference>
<dbReference type="RefSeq" id="XP_017173455.1">
    <property type="nucleotide sequence ID" value="XM_017317966.1"/>
</dbReference>
<dbReference type="BioGRID" id="230794">
    <property type="interactions" value="1"/>
</dbReference>
<dbReference type="FunCoup" id="Q68FE9">
    <property type="interactions" value="1184"/>
</dbReference>
<dbReference type="STRING" id="10090.ENSMUSP00000104785"/>
<dbReference type="GlyGen" id="Q68FE9">
    <property type="glycosylation" value="1 site, 1 O-linked glycan (1 site)"/>
</dbReference>
<dbReference type="iPTMnet" id="Q68FE9"/>
<dbReference type="PhosphoSitePlus" id="Q68FE9"/>
<dbReference type="PaxDb" id="10090-ENSMUSP00000104785"/>
<dbReference type="ProteomicsDB" id="297662"/>
<dbReference type="Antibodypedia" id="52541">
    <property type="antibodies" value="117 antibodies from 28 providers"/>
</dbReference>
<dbReference type="DNASU" id="228911"/>
<dbReference type="Ensembl" id="ENSMUST00000109157.2">
    <property type="protein sequence ID" value="ENSMUSP00000104785.2"/>
    <property type="gene ID" value="ENSMUSG00000047907.12"/>
</dbReference>
<dbReference type="Ensembl" id="ENSMUST00000109159.3">
    <property type="protein sequence ID" value="ENSMUSP00000104787.3"/>
    <property type="gene ID" value="ENSMUSG00000047907.12"/>
</dbReference>
<dbReference type="GeneID" id="228911"/>
<dbReference type="KEGG" id="mmu:228911"/>
<dbReference type="UCSC" id="uc008obo.2">
    <property type="organism name" value="mouse"/>
</dbReference>
<dbReference type="AGR" id="MGI:2153084"/>
<dbReference type="CTD" id="128553"/>
<dbReference type="MGI" id="MGI:2153084">
    <property type="gene designation" value="Tshz2"/>
</dbReference>
<dbReference type="VEuPathDB" id="HostDB:ENSMUSG00000047907"/>
<dbReference type="eggNOG" id="ENOG502QV71">
    <property type="taxonomic scope" value="Eukaryota"/>
</dbReference>
<dbReference type="GeneTree" id="ENSGT00950000183051"/>
<dbReference type="HOGENOM" id="CLU_010469_0_0_1"/>
<dbReference type="InParanoid" id="Q68FE9"/>
<dbReference type="OMA" id="TGHYQDN"/>
<dbReference type="OrthoDB" id="5815793at2759"/>
<dbReference type="PhylomeDB" id="Q68FE9"/>
<dbReference type="TreeFam" id="TF328447"/>
<dbReference type="BioGRID-ORCS" id="228911">
    <property type="hits" value="2 hits in 76 CRISPR screens"/>
</dbReference>
<dbReference type="ChiTaRS" id="Tshz2">
    <property type="organism name" value="mouse"/>
</dbReference>
<dbReference type="PRO" id="PR:Q68FE9"/>
<dbReference type="Proteomes" id="UP000000589">
    <property type="component" value="Chromosome 2"/>
</dbReference>
<dbReference type="RNAct" id="Q68FE9">
    <property type="molecule type" value="protein"/>
</dbReference>
<dbReference type="Bgee" id="ENSMUSG00000047907">
    <property type="expression patterns" value="Expressed in olfactory epithelium and 211 other cell types or tissues"/>
</dbReference>
<dbReference type="ExpressionAtlas" id="Q68FE9">
    <property type="expression patterns" value="baseline and differential"/>
</dbReference>
<dbReference type="GO" id="GO:0005634">
    <property type="term" value="C:nucleus"/>
    <property type="evidence" value="ECO:0007669"/>
    <property type="project" value="UniProtKB-SubCell"/>
</dbReference>
<dbReference type="GO" id="GO:0003677">
    <property type="term" value="F:DNA binding"/>
    <property type="evidence" value="ECO:0007669"/>
    <property type="project" value="UniProtKB-KW"/>
</dbReference>
<dbReference type="GO" id="GO:0008270">
    <property type="term" value="F:zinc ion binding"/>
    <property type="evidence" value="ECO:0007669"/>
    <property type="project" value="UniProtKB-KW"/>
</dbReference>
<dbReference type="GO" id="GO:0010468">
    <property type="term" value="P:regulation of gene expression"/>
    <property type="evidence" value="ECO:0000315"/>
    <property type="project" value="MGI"/>
</dbReference>
<dbReference type="CDD" id="cd00086">
    <property type="entry name" value="homeodomain"/>
    <property type="match status" value="1"/>
</dbReference>
<dbReference type="Gene3D" id="3.30.160.60">
    <property type="entry name" value="Classic Zinc Finger"/>
    <property type="match status" value="2"/>
</dbReference>
<dbReference type="InterPro" id="IPR001356">
    <property type="entry name" value="HD"/>
</dbReference>
<dbReference type="InterPro" id="IPR027008">
    <property type="entry name" value="Teashirt_fam"/>
</dbReference>
<dbReference type="InterPro" id="IPR013087">
    <property type="entry name" value="Znf_C2H2_type"/>
</dbReference>
<dbReference type="PANTHER" id="PTHR12487:SF3">
    <property type="entry name" value="TEASHIRT HOMOLOG 2"/>
    <property type="match status" value="1"/>
</dbReference>
<dbReference type="PANTHER" id="PTHR12487">
    <property type="entry name" value="TEASHIRT-RELATED"/>
    <property type="match status" value="1"/>
</dbReference>
<dbReference type="SMART" id="SM00389">
    <property type="entry name" value="HOX"/>
    <property type="match status" value="1"/>
</dbReference>
<dbReference type="SMART" id="SM00355">
    <property type="entry name" value="ZnF_C2H2"/>
    <property type="match status" value="5"/>
</dbReference>
<dbReference type="PROSITE" id="PS00028">
    <property type="entry name" value="ZINC_FINGER_C2H2_1"/>
    <property type="match status" value="4"/>
</dbReference>
<dbReference type="PROSITE" id="PS50157">
    <property type="entry name" value="ZINC_FINGER_C2H2_2"/>
    <property type="match status" value="3"/>
</dbReference>
<keyword id="KW-0175">Coiled coil</keyword>
<keyword id="KW-0217">Developmental protein</keyword>
<keyword id="KW-0238">DNA-binding</keyword>
<keyword id="KW-0371">Homeobox</keyword>
<keyword id="KW-1017">Isopeptide bond</keyword>
<keyword id="KW-0479">Metal-binding</keyword>
<keyword id="KW-0539">Nucleus</keyword>
<keyword id="KW-0597">Phosphoprotein</keyword>
<keyword id="KW-1185">Reference proteome</keyword>
<keyword id="KW-0677">Repeat</keyword>
<keyword id="KW-0678">Repressor</keyword>
<keyword id="KW-0804">Transcription</keyword>
<keyword id="KW-0805">Transcription regulation</keyword>
<keyword id="KW-0832">Ubl conjugation</keyword>
<keyword id="KW-0862">Zinc</keyword>
<keyword id="KW-0863">Zinc-finger</keyword>
<accession>Q68FE9</accession>
<accession>Q5DTF1</accession>
<accession>Q6AXH5</accession>
<accession>Q9JL71</accession>